<feature type="chain" id="PRO_0000127298" description="Myc proto-oncogene protein">
    <location>
        <begin position="1"/>
        <end position="452"/>
    </location>
</feature>
<feature type="domain" description="bHLH" evidence="4">
    <location>
        <begin position="367"/>
        <end position="419"/>
    </location>
</feature>
<feature type="region of interest" description="Disordered" evidence="5">
    <location>
        <begin position="214"/>
        <end position="377"/>
    </location>
</feature>
<feature type="region of interest" description="Leucine-zipper">
    <location>
        <begin position="426"/>
        <end position="447"/>
    </location>
</feature>
<feature type="short sequence motif" description="9aaTAD" evidence="2">
    <location>
        <begin position="113"/>
        <end position="121"/>
    </location>
</feature>
<feature type="short sequence motif" description="UBR5-degron" evidence="2">
    <location>
        <begin position="368"/>
        <end position="377"/>
    </location>
</feature>
<feature type="compositionally biased region" description="Low complexity" evidence="5">
    <location>
        <begin position="223"/>
        <end position="250"/>
    </location>
</feature>
<feature type="compositionally biased region" description="Acidic residues" evidence="5">
    <location>
        <begin position="264"/>
        <end position="276"/>
    </location>
</feature>
<feature type="compositionally biased region" description="Basic and acidic residues" evidence="5">
    <location>
        <begin position="279"/>
        <end position="291"/>
    </location>
</feature>
<feature type="compositionally biased region" description="Basic and acidic residues" evidence="5">
    <location>
        <begin position="328"/>
        <end position="344"/>
    </location>
</feature>
<feature type="compositionally biased region" description="Polar residues" evidence="5">
    <location>
        <begin position="348"/>
        <end position="360"/>
    </location>
</feature>
<feature type="modified residue" description="Phosphoserine" evidence="2">
    <location>
        <position position="19"/>
    </location>
</feature>
<feature type="modified residue" description="Phosphothreonine" evidence="2">
    <location>
        <position position="21"/>
    </location>
</feature>
<feature type="modified residue" description="Phosphothreonine; by GSK3; alternate" evidence="2">
    <location>
        <position position="71"/>
    </location>
</feature>
<feature type="modified residue" description="Phosphoserine; by DYRK2, GSK3 and CDK2" evidence="2">
    <location>
        <position position="75"/>
    </location>
</feature>
<feature type="modified residue" description="Phosphoserine" evidence="2">
    <location>
        <position position="84"/>
    </location>
</feature>
<feature type="modified residue" description="Phosphoserine" evidence="2">
    <location>
        <position position="94"/>
    </location>
</feature>
<feature type="modified residue" description="N6-acetyllysine; by PCAF; alternate" evidence="2">
    <location>
        <position position="156"/>
    </location>
</feature>
<feature type="modified residue" description="N6-acetyllysine; alternate" evidence="2">
    <location>
        <position position="161"/>
    </location>
</feature>
<feature type="modified residue" description="Phosphoserine" evidence="2">
    <location>
        <position position="164"/>
    </location>
</feature>
<feature type="modified residue" description="N6-acetyllysine; by PCAF" evidence="2">
    <location>
        <position position="170"/>
    </location>
</feature>
<feature type="modified residue" description="Phosphoserine" evidence="2">
    <location>
        <position position="172"/>
    </location>
</feature>
<feature type="modified residue" description="Phosphoserine" evidence="2">
    <location>
        <position position="174"/>
    </location>
</feature>
<feature type="modified residue" description="N6-acetyllysine; by PCAF" evidence="2">
    <location>
        <position position="288"/>
    </location>
</feature>
<feature type="modified residue" description="Phosphoserine" evidence="2">
    <location>
        <position position="306"/>
    </location>
</feature>
<feature type="modified residue" description="Phosphoserine" evidence="2">
    <location>
        <position position="327"/>
    </location>
</feature>
<feature type="modified residue" description="Phosphothreonine" evidence="2">
    <location>
        <position position="328"/>
    </location>
</feature>
<feature type="modified residue" description="N6-acetyllysine; by PCAF" evidence="2">
    <location>
        <position position="330"/>
    </location>
</feature>
<feature type="modified residue" description="N6-acetyllysine; by PCAF" evidence="2">
    <location>
        <position position="336"/>
    </location>
</feature>
<feature type="modified residue" description="Phosphoserine" evidence="3">
    <location>
        <position position="342"/>
    </location>
</feature>
<feature type="modified residue" description="Phosphoserine" evidence="2">
    <location>
        <position position="357"/>
    </location>
</feature>
<feature type="modified residue" description="Phosphoserine" evidence="2">
    <location>
        <position position="360"/>
    </location>
</feature>
<feature type="modified residue" description="Phosphoserine" evidence="2">
    <location>
        <position position="361"/>
    </location>
</feature>
<feature type="modified residue" description="N6-acetyllysine; by PCAF" evidence="2">
    <location>
        <position position="384"/>
    </location>
</feature>
<feature type="glycosylation site" description="O-linked (GlcNAc) threonine; alternate" evidence="1">
    <location>
        <position position="71"/>
    </location>
</feature>
<feature type="cross-link" description="Glycyl lysine isopeptide (Lys-Gly) (interchain with G-Cter in SUMO2)" evidence="2">
    <location>
        <position position="65"/>
    </location>
</feature>
<feature type="cross-link" description="Glycyl lysine isopeptide (Lys-Gly) (interchain with G-Cter in SUMO2); alternate" evidence="2">
    <location>
        <position position="156"/>
    </location>
</feature>
<feature type="cross-link" description="Glycyl lysine isopeptide (Lys-Gly) (interchain with G-Cter in SUMO2); alternate" evidence="2">
    <location>
        <position position="161"/>
    </location>
</feature>
<feature type="cross-link" description="Glycyl lysine isopeptide (Lys-Gly) (interchain with G-Cter in SUMO2)" evidence="2">
    <location>
        <position position="311"/>
    </location>
</feature>
<feature type="splice variant" id="VSP_061784" description="In isoform 1.">
    <location>
        <begin position="1"/>
        <end position="13"/>
    </location>
</feature>
<organism>
    <name type="scientific">Sus scrofa</name>
    <name type="common">Pig</name>
    <dbReference type="NCBI Taxonomy" id="9823"/>
    <lineage>
        <taxon>Eukaryota</taxon>
        <taxon>Metazoa</taxon>
        <taxon>Chordata</taxon>
        <taxon>Craniata</taxon>
        <taxon>Vertebrata</taxon>
        <taxon>Euteleostomi</taxon>
        <taxon>Mammalia</taxon>
        <taxon>Eutheria</taxon>
        <taxon>Laurasiatheria</taxon>
        <taxon>Artiodactyla</taxon>
        <taxon>Suina</taxon>
        <taxon>Suidae</taxon>
        <taxon>Sus</taxon>
    </lineage>
</organism>
<accession>Q29031</accession>
<keyword id="KW-0007">Acetylation</keyword>
<keyword id="KW-0010">Activator</keyword>
<keyword id="KW-0024">Alternative initiation</keyword>
<keyword id="KW-0158">Chromosome</keyword>
<keyword id="KW-0963">Cytoplasm</keyword>
<keyword id="KW-0238">DNA-binding</keyword>
<keyword id="KW-0325">Glycoprotein</keyword>
<keyword id="KW-1017">Isopeptide bond</keyword>
<keyword id="KW-0539">Nucleus</keyword>
<keyword id="KW-0597">Phosphoprotein</keyword>
<keyword id="KW-0656">Proto-oncogene</keyword>
<keyword id="KW-1185">Reference proteome</keyword>
<keyword id="KW-0804">Transcription</keyword>
<keyword id="KW-0805">Transcription regulation</keyword>
<keyword id="KW-0832">Ubl conjugation</keyword>
<comment type="function">
    <text evidence="2 3">Transcription factor that binds DNA in a non-specific manner, yet also specifically recognizes the core sequence 5'-CAC[GA]TG-3'. Activates the transcription of growth-related genes. Binds to the VEGFA promoter, promoting VEGFA production and subsequent sprouting angiogenesis. Regulator of somatic reprogramming, controls self-renewal of embryonic stem cells. Functions with TAF6L to activate target gene expression through RNA polymerase II pause release (By similarity). Positively regulates transcription of HNRNPA1, HNRNPA2 and PTBP1 which in turn regulate splicing of pyruvate kinase PKM by binding repressively to sequences flanking PKM exon 9, inhibiting exon 9 inclusion and resulting in exon 10 inclusion and production of the PKM M2 isoform (By similarity).</text>
</comment>
<comment type="subunit">
    <text evidence="2 3">Efficient DNA binding requires dimerization with another bHLH protein. Binds DNA as a heterodimer with MAX (By similarity). Interacts with TAF1C and SPAG9. Interacts with PARP10. Interacts with KDM5A and KDM5B. Interacts (when phosphorylated at Thr-71 and Ser-75) with FBXW7. Interacts with PIM2. Interacts with RIOX1. The heterodimer MYC:MAX interacts with ABI1; the interaction may enhance MYC:MAX transcriptional activity. Interacts with TRIM6 (By similarity). Interacts with NPM1; the binary complex is recruited to the promoter of MYC target genes and enhances their transcription (By similarity). Interacts with CIP2A; leading to the stabilization of MYC (By similarity). Interacts with NUP205 (By similarity). Interacts with HEATR1; the interaction is required for localization of MYC to the nucleolus (By similarity).</text>
</comment>
<comment type="subcellular location">
    <subcellularLocation>
        <location evidence="2">Nucleus</location>
        <location evidence="2">Nucleoplasm</location>
    </subcellularLocation>
    <subcellularLocation>
        <location evidence="2">Nucleus</location>
        <location evidence="2">Nucleolus</location>
    </subcellularLocation>
    <subcellularLocation>
        <location evidence="2">Nucleus</location>
    </subcellularLocation>
    <subcellularLocation>
        <location evidence="2">Cytoplasm</location>
    </subcellularLocation>
    <subcellularLocation>
        <location evidence="2">Chromosome</location>
    </subcellularLocation>
    <text evidence="2">Association with chromatin is reduced by hyperphosphorylation. Localization to the nucleolus is dependent on HEATR1.</text>
</comment>
<comment type="alternative products">
    <event type="alternative initiation"/>
    <isoform>
        <id>Q29031-1</id>
        <name>2</name>
        <name evidence="7">c-myc 1</name>
        <sequence type="displayed"/>
    </isoform>
    <isoform>
        <id>Q29031-2</id>
        <name>1</name>
        <name evidence="7">c-myc 2</name>
        <sequence type="described" ref="VSP_061784"/>
    </isoform>
</comment>
<comment type="domain">
    <text evidence="2">The 9aaTAD motif is a transactivation domain present in a large number of yeast and animal transcription factors.</text>
</comment>
<comment type="PTM">
    <text evidence="2 3">Phosphorylated by PRKDC (By similarity). Phosphorylation at Ser-342 by PIM2 leads to the stabilization of MYC (By similarity). Phosphorylation at Ser-75 by CDK2 prevents Ras-induced senescence. Phosphorylated at Ser-75 by DYRK2; this primes the protein for subsequent phosphorylation by GSK3B at Thr-71. Phosphorylation at Thr-71 and Ser-75 by GSK3 is required for ubiquitination and degradation by the proteasome. Dephosphorylation at multiple sites by the PNUTS-PP1 complex promotes MYC stability by preventing ubiquitination by the SCF(FBXW7) complex. Dephosphorylation at Ser-75 by protein phosphatase 2A (PPP2CA) promotes its degradation; interaction with PPP2CA is enhanced by AMBRA1 (By similarity).</text>
</comment>
<comment type="PTM">
    <text evidence="2 3">Ubiquitinated by the SCF(FBXW7) complex when phosphorylated at Thr-71 and Ser-75, leading to its degradation by the proteasome. Ubiquitination is counteracted by USP28 in the nucleoplasm and USP36 in the nucleolus, both interacting with of FBXW7, leading to its deubiquitination and preventing degradation. Also polyubiquitinated by the DCX(TRPC4AP) complex. Ubiquitinated by UBR5 when not forming a heterodimer with another bHLH protein, leading to its degradation: UBR5 recognizes and binds a degron that is only available upon heterodimer dissociation (By similarity). Ubiquitinated by TRIM6 in a phosphorylation-independent manner.</text>
</comment>
<comment type="biotechnology">
    <text evidence="6">POU5F1/OCT4, SOX2, MYC/c-Myc and KLF4 are the four Yamanaka factors. When combined, these factors are sufficient to reprogram differentiated cells to an embryonic-like state designated iPS (induced pluripotent stem) cells. iPS cells exhibit the morphology and growth properties of ES cells and express ES cell marker genes.</text>
</comment>
<comment type="miscellaneous">
    <text evidence="8">Alternative translation initiation from an upstream, in-frame non-ATG (CTG) codon or a downstream ATG start site results in the production of 2 isoforms with distinct N-termini, shown in this entry as isoform 2 and isoform 1, respectively.</text>
</comment>
<comment type="miscellaneous">
    <molecule>Isoform 2</molecule>
    <text evidence="8">Produced by alternative translation initiation from a CTG codon, which is translated as Met.</text>
</comment>
<dbReference type="EMBL" id="X97040">
    <property type="protein sequence ID" value="CAA65753.1"/>
    <property type="molecule type" value="Genomic_DNA"/>
</dbReference>
<dbReference type="RefSeq" id="NP_001005154.2">
    <molecule id="Q29031-1"/>
    <property type="nucleotide sequence ID" value="NM_001005154.1"/>
</dbReference>
<dbReference type="SMR" id="Q29031"/>
<dbReference type="FunCoup" id="Q29031">
    <property type="interactions" value="139"/>
</dbReference>
<dbReference type="STRING" id="9823.ENSSSCP00000074218"/>
<dbReference type="GlyCosmos" id="Q29031">
    <property type="glycosylation" value="1 site, No reported glycans"/>
</dbReference>
<dbReference type="GlyGen" id="Q29031">
    <property type="glycosylation" value="1 site"/>
</dbReference>
<dbReference type="PaxDb" id="9823-ENSSSCP00000006374"/>
<dbReference type="GeneID" id="448810"/>
<dbReference type="KEGG" id="ssc:448810"/>
<dbReference type="CTD" id="4609"/>
<dbReference type="eggNOG" id="KOG2483">
    <property type="taxonomic scope" value="Eukaryota"/>
</dbReference>
<dbReference type="InParanoid" id="Q29031"/>
<dbReference type="OrthoDB" id="5964374at2759"/>
<dbReference type="Proteomes" id="UP000008227">
    <property type="component" value="Unplaced"/>
</dbReference>
<dbReference type="Proteomes" id="UP000314985">
    <property type="component" value="Unplaced"/>
</dbReference>
<dbReference type="Proteomes" id="UP000694570">
    <property type="component" value="Unplaced"/>
</dbReference>
<dbReference type="Proteomes" id="UP000694571">
    <property type="component" value="Unplaced"/>
</dbReference>
<dbReference type="Proteomes" id="UP000694720">
    <property type="component" value="Unplaced"/>
</dbReference>
<dbReference type="Proteomes" id="UP000694722">
    <property type="component" value="Unplaced"/>
</dbReference>
<dbReference type="Proteomes" id="UP000694723">
    <property type="component" value="Unplaced"/>
</dbReference>
<dbReference type="Proteomes" id="UP000694724">
    <property type="component" value="Unplaced"/>
</dbReference>
<dbReference type="Proteomes" id="UP000694725">
    <property type="component" value="Unplaced"/>
</dbReference>
<dbReference type="Proteomes" id="UP000694726">
    <property type="component" value="Unplaced"/>
</dbReference>
<dbReference type="Proteomes" id="UP000694727">
    <property type="component" value="Unplaced"/>
</dbReference>
<dbReference type="Proteomes" id="UP000694728">
    <property type="component" value="Unplaced"/>
</dbReference>
<dbReference type="GO" id="GO:0005737">
    <property type="term" value="C:cytoplasm"/>
    <property type="evidence" value="ECO:0007669"/>
    <property type="project" value="UniProtKB-SubCell"/>
</dbReference>
<dbReference type="GO" id="GO:0016604">
    <property type="term" value="C:nuclear body"/>
    <property type="evidence" value="ECO:0000250"/>
    <property type="project" value="AgBase"/>
</dbReference>
<dbReference type="GO" id="GO:0005730">
    <property type="term" value="C:nucleolus"/>
    <property type="evidence" value="ECO:0000250"/>
    <property type="project" value="UniProtKB"/>
</dbReference>
<dbReference type="GO" id="GO:0005654">
    <property type="term" value="C:nucleoplasm"/>
    <property type="evidence" value="ECO:0000250"/>
    <property type="project" value="UniProtKB"/>
</dbReference>
<dbReference type="GO" id="GO:0005634">
    <property type="term" value="C:nucleus"/>
    <property type="evidence" value="ECO:0000250"/>
    <property type="project" value="UniProtKB"/>
</dbReference>
<dbReference type="GO" id="GO:0005819">
    <property type="term" value="C:spindle"/>
    <property type="evidence" value="ECO:0000250"/>
    <property type="project" value="AgBase"/>
</dbReference>
<dbReference type="GO" id="GO:0003677">
    <property type="term" value="F:DNA binding"/>
    <property type="evidence" value="ECO:0000250"/>
    <property type="project" value="UniProtKB"/>
</dbReference>
<dbReference type="GO" id="GO:0000981">
    <property type="term" value="F:DNA-binding transcription factor activity, RNA polymerase II-specific"/>
    <property type="evidence" value="ECO:0000250"/>
    <property type="project" value="UniProtKB"/>
</dbReference>
<dbReference type="GO" id="GO:0070888">
    <property type="term" value="F:E-box binding"/>
    <property type="evidence" value="ECO:0000250"/>
    <property type="project" value="UniProtKB"/>
</dbReference>
<dbReference type="GO" id="GO:0046983">
    <property type="term" value="F:protein dimerization activity"/>
    <property type="evidence" value="ECO:0007669"/>
    <property type="project" value="InterPro"/>
</dbReference>
<dbReference type="GO" id="GO:0044877">
    <property type="term" value="F:protein-containing complex binding"/>
    <property type="evidence" value="ECO:0000250"/>
    <property type="project" value="UniProtKB"/>
</dbReference>
<dbReference type="GO" id="GO:0000978">
    <property type="term" value="F:RNA polymerase II cis-regulatory region sequence-specific DNA binding"/>
    <property type="evidence" value="ECO:0000318"/>
    <property type="project" value="GO_Central"/>
</dbReference>
<dbReference type="GO" id="GO:0006338">
    <property type="term" value="P:chromatin remodeling"/>
    <property type="evidence" value="ECO:0000250"/>
    <property type="project" value="UniProtKB"/>
</dbReference>
<dbReference type="GO" id="GO:0051276">
    <property type="term" value="P:chromosome organization"/>
    <property type="evidence" value="ECO:0000250"/>
    <property type="project" value="UniProtKB"/>
</dbReference>
<dbReference type="GO" id="GO:0006974">
    <property type="term" value="P:DNA damage response"/>
    <property type="evidence" value="ECO:0000250"/>
    <property type="project" value="UniProtKB"/>
</dbReference>
<dbReference type="GO" id="GO:0000082">
    <property type="term" value="P:G1/S transition of mitotic cell cycle"/>
    <property type="evidence" value="ECO:0000250"/>
    <property type="project" value="UniProtKB"/>
</dbReference>
<dbReference type="GO" id="GO:0006879">
    <property type="term" value="P:intracellular iron ion homeostasis"/>
    <property type="evidence" value="ECO:0000250"/>
    <property type="project" value="UniProtKB"/>
</dbReference>
<dbReference type="GO" id="GO:0097193">
    <property type="term" value="P:intrinsic apoptotic signaling pathway"/>
    <property type="evidence" value="ECO:0000250"/>
    <property type="project" value="AgBase"/>
</dbReference>
<dbReference type="GO" id="GO:0000165">
    <property type="term" value="P:MAPK cascade"/>
    <property type="evidence" value="ECO:0000250"/>
    <property type="project" value="UniProtKB"/>
</dbReference>
<dbReference type="GO" id="GO:0043066">
    <property type="term" value="P:negative regulation of apoptotic process"/>
    <property type="evidence" value="ECO:0000250"/>
    <property type="project" value="UniProtKB"/>
</dbReference>
<dbReference type="GO" id="GO:0051782">
    <property type="term" value="P:negative regulation of cell division"/>
    <property type="evidence" value="ECO:0000250"/>
    <property type="project" value="UniProtKB"/>
</dbReference>
<dbReference type="GO" id="GO:0045656">
    <property type="term" value="P:negative regulation of monocyte differentiation"/>
    <property type="evidence" value="ECO:0000250"/>
    <property type="project" value="UniProtKB"/>
</dbReference>
<dbReference type="GO" id="GO:0032873">
    <property type="term" value="P:negative regulation of stress-activated MAPK cascade"/>
    <property type="evidence" value="ECO:0000250"/>
    <property type="project" value="UniProtKB"/>
</dbReference>
<dbReference type="GO" id="GO:0008284">
    <property type="term" value="P:positive regulation of cell population proliferation"/>
    <property type="evidence" value="ECO:0000250"/>
    <property type="project" value="AgBase"/>
</dbReference>
<dbReference type="GO" id="GO:0045893">
    <property type="term" value="P:positive regulation of DNA-templated transcription"/>
    <property type="evidence" value="ECO:0000250"/>
    <property type="project" value="UniProtKB"/>
</dbReference>
<dbReference type="GO" id="GO:0050679">
    <property type="term" value="P:positive regulation of epithelial cell proliferation"/>
    <property type="evidence" value="ECO:0000250"/>
    <property type="project" value="UniProtKB"/>
</dbReference>
<dbReference type="GO" id="GO:0048146">
    <property type="term" value="P:positive regulation of fibroblast proliferation"/>
    <property type="evidence" value="ECO:0000250"/>
    <property type="project" value="UniProtKB"/>
</dbReference>
<dbReference type="GO" id="GO:0045944">
    <property type="term" value="P:positive regulation of transcription by RNA polymerase II"/>
    <property type="evidence" value="ECO:0000250"/>
    <property type="project" value="UniProtKB"/>
</dbReference>
<dbReference type="GO" id="GO:0042981">
    <property type="term" value="P:regulation of apoptotic process"/>
    <property type="evidence" value="ECO:0000250"/>
    <property type="project" value="AgBase"/>
</dbReference>
<dbReference type="GO" id="GO:0006355">
    <property type="term" value="P:regulation of DNA-templated transcription"/>
    <property type="evidence" value="ECO:0000250"/>
    <property type="project" value="AgBase"/>
</dbReference>
<dbReference type="GO" id="GO:1904672">
    <property type="term" value="P:regulation of somatic stem cell population maintenance"/>
    <property type="evidence" value="ECO:0000250"/>
    <property type="project" value="UniProtKB"/>
</dbReference>
<dbReference type="GO" id="GO:0032204">
    <property type="term" value="P:regulation of telomere maintenance"/>
    <property type="evidence" value="ECO:0000250"/>
    <property type="project" value="UniProtKB"/>
</dbReference>
<dbReference type="GO" id="GO:0006357">
    <property type="term" value="P:regulation of transcription by RNA polymerase II"/>
    <property type="evidence" value="ECO:0000318"/>
    <property type="project" value="GO_Central"/>
</dbReference>
<dbReference type="GO" id="GO:0009314">
    <property type="term" value="P:response to radiation"/>
    <property type="evidence" value="ECO:0000250"/>
    <property type="project" value="AgBase"/>
</dbReference>
<dbReference type="GO" id="GO:0009410">
    <property type="term" value="P:response to xenobiotic stimulus"/>
    <property type="evidence" value="ECO:0000250"/>
    <property type="project" value="UniProtKB"/>
</dbReference>
<dbReference type="GO" id="GO:0016072">
    <property type="term" value="P:rRNA metabolic process"/>
    <property type="evidence" value="ECO:0000250"/>
    <property type="project" value="UniProtKB"/>
</dbReference>
<dbReference type="CDD" id="cd11458">
    <property type="entry name" value="bHLHzip_c-Myc"/>
    <property type="match status" value="1"/>
</dbReference>
<dbReference type="FunFam" id="4.10.280.10:FF:000019">
    <property type="entry name" value="Myc proto-oncogene protein"/>
    <property type="match status" value="1"/>
</dbReference>
<dbReference type="Gene3D" id="4.10.280.10">
    <property type="entry name" value="Helix-loop-helix DNA-binding domain"/>
    <property type="match status" value="1"/>
</dbReference>
<dbReference type="InterPro" id="IPR011598">
    <property type="entry name" value="bHLH_dom"/>
</dbReference>
<dbReference type="InterPro" id="IPR036638">
    <property type="entry name" value="HLH_DNA-bd_sf"/>
</dbReference>
<dbReference type="InterPro" id="IPR003327">
    <property type="entry name" value="Myc-LZ"/>
</dbReference>
<dbReference type="InterPro" id="IPR050433">
    <property type="entry name" value="Myc_transcription_factors"/>
</dbReference>
<dbReference type="InterPro" id="IPR002418">
    <property type="entry name" value="Tscrpt_reg_Myc"/>
</dbReference>
<dbReference type="InterPro" id="IPR012682">
    <property type="entry name" value="Tscrpt_reg_Myc_N"/>
</dbReference>
<dbReference type="PANTHER" id="PTHR45851">
    <property type="entry name" value="MYC PROTO-ONCOGENE"/>
    <property type="match status" value="1"/>
</dbReference>
<dbReference type="Pfam" id="PF00010">
    <property type="entry name" value="HLH"/>
    <property type="match status" value="1"/>
</dbReference>
<dbReference type="Pfam" id="PF02344">
    <property type="entry name" value="Myc-LZ"/>
    <property type="match status" value="1"/>
</dbReference>
<dbReference type="Pfam" id="PF01056">
    <property type="entry name" value="Myc_N"/>
    <property type="match status" value="1"/>
</dbReference>
<dbReference type="PIRSF" id="PIRSF001705">
    <property type="entry name" value="Myc_protein"/>
    <property type="match status" value="1"/>
</dbReference>
<dbReference type="PRINTS" id="PR00044">
    <property type="entry name" value="LEUZIPPRMYC"/>
</dbReference>
<dbReference type="SMART" id="SM00353">
    <property type="entry name" value="HLH"/>
    <property type="match status" value="1"/>
</dbReference>
<dbReference type="SUPFAM" id="SSF47459">
    <property type="entry name" value="HLH, helix-loop-helix DNA-binding domain"/>
    <property type="match status" value="1"/>
</dbReference>
<dbReference type="PROSITE" id="PS50888">
    <property type="entry name" value="BHLH"/>
    <property type="match status" value="1"/>
</dbReference>
<evidence type="ECO:0000250" key="1"/>
<evidence type="ECO:0000250" key="2">
    <source>
        <dbReference type="UniProtKB" id="P01106"/>
    </source>
</evidence>
<evidence type="ECO:0000250" key="3">
    <source>
        <dbReference type="UniProtKB" id="P01108"/>
    </source>
</evidence>
<evidence type="ECO:0000255" key="4">
    <source>
        <dbReference type="PROSITE-ProRule" id="PRU00981"/>
    </source>
</evidence>
<evidence type="ECO:0000256" key="5">
    <source>
        <dbReference type="SAM" id="MobiDB-lite"/>
    </source>
</evidence>
<evidence type="ECO:0000269" key="6">
    <source>
    </source>
</evidence>
<evidence type="ECO:0000303" key="7">
    <source>
    </source>
</evidence>
<evidence type="ECO:0000305" key="8">
    <source>
    </source>
</evidence>
<reference key="1">
    <citation type="journal article" date="1999" name="Anim. Genet.">
        <title>Isolation and characterization of the porcine c-myc proto-oncogene and chromosomal assignment to SSC 4p13.</title>
        <authorList>
            <person name="Reiner G."/>
            <person name="Hecht G."/>
            <person name="Leeb T."/>
            <person name="Brenig B."/>
            <person name="Robic A."/>
            <person name="Dzapo V."/>
        </authorList>
    </citation>
    <scope>NUCLEOTIDE SEQUENCE [GENOMIC DNA]</scope>
    <source>
        <tissue>Liver</tissue>
    </source>
</reference>
<reference key="2">
    <citation type="journal article" date="1988" name="Cell">
        <title>A non-AUG translational initiation in c-myc exon 1 generates an N-terminally distinct protein whose synthesis is disrupted in Burkitt's lymphomas.</title>
        <authorList>
            <person name="Hann S.R."/>
            <person name="King M.W."/>
            <person name="Bentley D.L."/>
            <person name="Anderson C.W."/>
            <person name="Eisenman R.N."/>
        </authorList>
    </citation>
    <scope>ALTERNATIVE TRANSLATION INITIATION</scope>
</reference>
<reference key="3">
    <citation type="journal article" date="2009" name="Cell Cycle">
        <title>Induced pluripotent stem cells from swine (Sus scrofa): why they may prove to be important.</title>
        <authorList>
            <person name="Roberts R.M."/>
            <person name="Telugu B.P."/>
            <person name="Ezashi T."/>
        </authorList>
    </citation>
    <scope>BIOTECHNOLOGY</scope>
</reference>
<proteinExistence type="evidence at protein level"/>
<protein>
    <recommendedName>
        <fullName>Myc proto-oncogene protein</fullName>
    </recommendedName>
    <alternativeName>
        <fullName>Proto-oncogene c-Myc</fullName>
    </alternativeName>
    <alternativeName>
        <fullName>Transcription factor p64</fullName>
    </alternativeName>
</protein>
<gene>
    <name type="primary">MYC</name>
</gene>
<name>MYC_PIG</name>
<sequence length="452" mass="50088">MDFLRIVENPAAAMPLNVSFTNRNYDLDYDSVQPYFYCDEEENFYQQQQQSELQPPAPSEDIWKKFELLPTPPLSPSRRSGLCSPSYVAVASFSPRGDDDGGGGSFSTADQLEMVTELLGGDMVNQSFICDPDDETFIKNIIIQDCMWSGFSAAAKLVSEKLASYQAARKDSGSPIPARGHGGYSTSSLYLQDLSAAASECIDPSVVFPYPLNDSSSPKPCASPDSTAFSPSSDSLLSSAESSPRGSPEPLALHEETPPTTSSDSEEEQEDEEEIDVVSVEKRQPPAKRSESGSPSAGGHSKPPHSPLVLKRCHVSTHQHNYAAPPSTRKDYPSAKRAKLDSGRVLKQISNNRKCASPRSSDTEENDKRRTHNVLERQRRNELKRSFFARRDQIPELENNEKAPKVVILKKATAYILSVQAEEQKLVSEKDVLRKRREQLKLKLEQLRNSCP</sequence>